<proteinExistence type="inferred from homology"/>
<dbReference type="EC" id="2.4.1.227" evidence="1"/>
<dbReference type="EMBL" id="CP001110">
    <property type="protein sequence ID" value="ACF45037.1"/>
    <property type="molecule type" value="Genomic_DNA"/>
</dbReference>
<dbReference type="RefSeq" id="WP_012509505.1">
    <property type="nucleotide sequence ID" value="NC_011060.1"/>
</dbReference>
<dbReference type="SMR" id="B4SH49"/>
<dbReference type="STRING" id="324925.Ppha_2894"/>
<dbReference type="CAZy" id="GT28">
    <property type="family name" value="Glycosyltransferase Family 28"/>
</dbReference>
<dbReference type="KEGG" id="pph:Ppha_2894"/>
<dbReference type="eggNOG" id="COG0707">
    <property type="taxonomic scope" value="Bacteria"/>
</dbReference>
<dbReference type="HOGENOM" id="CLU_037404_0_1_10"/>
<dbReference type="OrthoDB" id="9808936at2"/>
<dbReference type="UniPathway" id="UPA00219"/>
<dbReference type="Proteomes" id="UP000002724">
    <property type="component" value="Chromosome"/>
</dbReference>
<dbReference type="GO" id="GO:0005886">
    <property type="term" value="C:plasma membrane"/>
    <property type="evidence" value="ECO:0007669"/>
    <property type="project" value="UniProtKB-SubCell"/>
</dbReference>
<dbReference type="GO" id="GO:0051991">
    <property type="term" value="F:UDP-N-acetyl-D-glucosamine:N-acetylmuramoyl-L-alanyl-D-glutamyl-meso-2,6-diaminopimelyl-D-alanyl-D-alanine-diphosphoundecaprenol 4-beta-N-acetylglucosaminlytransferase activity"/>
    <property type="evidence" value="ECO:0007669"/>
    <property type="project" value="RHEA"/>
</dbReference>
<dbReference type="GO" id="GO:0050511">
    <property type="term" value="F:undecaprenyldiphospho-muramoylpentapeptide beta-N-acetylglucosaminyltransferase activity"/>
    <property type="evidence" value="ECO:0007669"/>
    <property type="project" value="UniProtKB-UniRule"/>
</dbReference>
<dbReference type="GO" id="GO:0005975">
    <property type="term" value="P:carbohydrate metabolic process"/>
    <property type="evidence" value="ECO:0007669"/>
    <property type="project" value="InterPro"/>
</dbReference>
<dbReference type="GO" id="GO:0051301">
    <property type="term" value="P:cell division"/>
    <property type="evidence" value="ECO:0007669"/>
    <property type="project" value="UniProtKB-KW"/>
</dbReference>
<dbReference type="GO" id="GO:0071555">
    <property type="term" value="P:cell wall organization"/>
    <property type="evidence" value="ECO:0007669"/>
    <property type="project" value="UniProtKB-KW"/>
</dbReference>
<dbReference type="GO" id="GO:0030259">
    <property type="term" value="P:lipid glycosylation"/>
    <property type="evidence" value="ECO:0007669"/>
    <property type="project" value="UniProtKB-UniRule"/>
</dbReference>
<dbReference type="GO" id="GO:0009252">
    <property type="term" value="P:peptidoglycan biosynthetic process"/>
    <property type="evidence" value="ECO:0007669"/>
    <property type="project" value="UniProtKB-UniRule"/>
</dbReference>
<dbReference type="GO" id="GO:0008360">
    <property type="term" value="P:regulation of cell shape"/>
    <property type="evidence" value="ECO:0007669"/>
    <property type="project" value="UniProtKB-KW"/>
</dbReference>
<dbReference type="CDD" id="cd03785">
    <property type="entry name" value="GT28_MurG"/>
    <property type="match status" value="1"/>
</dbReference>
<dbReference type="Gene3D" id="3.40.50.2000">
    <property type="entry name" value="Glycogen Phosphorylase B"/>
    <property type="match status" value="2"/>
</dbReference>
<dbReference type="HAMAP" id="MF_00033">
    <property type="entry name" value="MurG"/>
    <property type="match status" value="1"/>
</dbReference>
<dbReference type="InterPro" id="IPR006009">
    <property type="entry name" value="GlcNAc_MurG"/>
</dbReference>
<dbReference type="InterPro" id="IPR007235">
    <property type="entry name" value="Glyco_trans_28_C"/>
</dbReference>
<dbReference type="InterPro" id="IPR004276">
    <property type="entry name" value="GlycoTrans_28_N"/>
</dbReference>
<dbReference type="NCBIfam" id="TIGR01133">
    <property type="entry name" value="murG"/>
    <property type="match status" value="1"/>
</dbReference>
<dbReference type="PANTHER" id="PTHR21015:SF22">
    <property type="entry name" value="GLYCOSYLTRANSFERASE"/>
    <property type="match status" value="1"/>
</dbReference>
<dbReference type="PANTHER" id="PTHR21015">
    <property type="entry name" value="UDP-N-ACETYLGLUCOSAMINE--N-ACETYLMURAMYL-(PENTAPEPTIDE) PYROPHOSPHORYL-UNDECAPRENOL N-ACETYLGLUCOSAMINE TRANSFERASE 1"/>
    <property type="match status" value="1"/>
</dbReference>
<dbReference type="Pfam" id="PF04101">
    <property type="entry name" value="Glyco_tran_28_C"/>
    <property type="match status" value="1"/>
</dbReference>
<dbReference type="Pfam" id="PF03033">
    <property type="entry name" value="Glyco_transf_28"/>
    <property type="match status" value="1"/>
</dbReference>
<dbReference type="SUPFAM" id="SSF53756">
    <property type="entry name" value="UDP-Glycosyltransferase/glycogen phosphorylase"/>
    <property type="match status" value="1"/>
</dbReference>
<name>MURG_PELPB</name>
<accession>B4SH49</accession>
<keyword id="KW-0131">Cell cycle</keyword>
<keyword id="KW-0132">Cell division</keyword>
<keyword id="KW-0997">Cell inner membrane</keyword>
<keyword id="KW-1003">Cell membrane</keyword>
<keyword id="KW-0133">Cell shape</keyword>
<keyword id="KW-0961">Cell wall biogenesis/degradation</keyword>
<keyword id="KW-0328">Glycosyltransferase</keyword>
<keyword id="KW-0472">Membrane</keyword>
<keyword id="KW-0573">Peptidoglycan synthesis</keyword>
<keyword id="KW-1185">Reference proteome</keyword>
<keyword id="KW-0808">Transferase</keyword>
<comment type="function">
    <text evidence="1">Cell wall formation. Catalyzes the transfer of a GlcNAc subunit on undecaprenyl-pyrophosphoryl-MurNAc-pentapeptide (lipid intermediate I) to form undecaprenyl-pyrophosphoryl-MurNAc-(pentapeptide)GlcNAc (lipid intermediate II).</text>
</comment>
<comment type="catalytic activity">
    <reaction evidence="1">
        <text>di-trans,octa-cis-undecaprenyl diphospho-N-acetyl-alpha-D-muramoyl-L-alanyl-D-glutamyl-meso-2,6-diaminopimeloyl-D-alanyl-D-alanine + UDP-N-acetyl-alpha-D-glucosamine = di-trans,octa-cis-undecaprenyl diphospho-[N-acetyl-alpha-D-glucosaminyl-(1-&gt;4)]-N-acetyl-alpha-D-muramoyl-L-alanyl-D-glutamyl-meso-2,6-diaminopimeloyl-D-alanyl-D-alanine + UDP + H(+)</text>
        <dbReference type="Rhea" id="RHEA:31227"/>
        <dbReference type="ChEBI" id="CHEBI:15378"/>
        <dbReference type="ChEBI" id="CHEBI:57705"/>
        <dbReference type="ChEBI" id="CHEBI:58223"/>
        <dbReference type="ChEBI" id="CHEBI:61387"/>
        <dbReference type="ChEBI" id="CHEBI:61388"/>
        <dbReference type="EC" id="2.4.1.227"/>
    </reaction>
</comment>
<comment type="pathway">
    <text evidence="1">Cell wall biogenesis; peptidoglycan biosynthesis.</text>
</comment>
<comment type="subcellular location">
    <subcellularLocation>
        <location evidence="1">Cell inner membrane</location>
        <topology evidence="1">Peripheral membrane protein</topology>
        <orientation evidence="1">Cytoplasmic side</orientation>
    </subcellularLocation>
</comment>
<comment type="similarity">
    <text evidence="1">Belongs to the glycosyltransferase 28 family. MurG subfamily.</text>
</comment>
<organism>
    <name type="scientific">Pelodictyon phaeoclathratiforme (strain DSM 5477 / BU-1)</name>
    <dbReference type="NCBI Taxonomy" id="324925"/>
    <lineage>
        <taxon>Bacteria</taxon>
        <taxon>Pseudomonadati</taxon>
        <taxon>Chlorobiota</taxon>
        <taxon>Chlorobiia</taxon>
        <taxon>Chlorobiales</taxon>
        <taxon>Chlorobiaceae</taxon>
        <taxon>Chlorobium/Pelodictyon group</taxon>
        <taxon>Pelodictyon</taxon>
    </lineage>
</organism>
<gene>
    <name evidence="1" type="primary">murG</name>
    <name type="ordered locus">Ppha_2894</name>
</gene>
<sequence length="365" mass="39074">MNVLFAGGGTGGHLYPAIAMAGELRKLVPDVVISFVGTTGGIEATEVPRLGYRLHLIPVRGLKRGRALADIVANIGVIADFVAALGRAAALIAREAPDVVVGTGGFVSAPLLLAAQLMRKKTLIQEQNAFPGVTTKLLAALASEVHLSFDDARRFIRNKKRLFVTGNPARSFALPQQVAAREYFALSEERPTLLVFGGSRGARSINNAVLEGVDLITASANLVWQTGALDFERIKSKMQPSPYIWVAPYIEEMGVAYGAADLVLCRAGASSLAELTNLGKPSVLVPYPYATGDHQRHNARALVTGGAAMLVEDDRLGQQASIKNILELLHDKERLKRMGAASRKLAYPDSAHQLALRIISLAKKN</sequence>
<evidence type="ECO:0000255" key="1">
    <source>
        <dbReference type="HAMAP-Rule" id="MF_00033"/>
    </source>
</evidence>
<protein>
    <recommendedName>
        <fullName evidence="1">UDP-N-acetylglucosamine--N-acetylmuramyl-(pentapeptide) pyrophosphoryl-undecaprenol N-acetylglucosamine transferase</fullName>
        <ecNumber evidence="1">2.4.1.227</ecNumber>
    </recommendedName>
    <alternativeName>
        <fullName evidence="1">Undecaprenyl-PP-MurNAc-pentapeptide-UDPGlcNAc GlcNAc transferase</fullName>
    </alternativeName>
</protein>
<reference key="1">
    <citation type="submission" date="2008-06" db="EMBL/GenBank/DDBJ databases">
        <title>Complete sequence of Pelodictyon phaeoclathratiforme BU-1.</title>
        <authorList>
            <consortium name="US DOE Joint Genome Institute"/>
            <person name="Lucas S."/>
            <person name="Copeland A."/>
            <person name="Lapidus A."/>
            <person name="Glavina del Rio T."/>
            <person name="Dalin E."/>
            <person name="Tice H."/>
            <person name="Bruce D."/>
            <person name="Goodwin L."/>
            <person name="Pitluck S."/>
            <person name="Schmutz J."/>
            <person name="Larimer F."/>
            <person name="Land M."/>
            <person name="Hauser L."/>
            <person name="Kyrpides N."/>
            <person name="Mikhailova N."/>
            <person name="Liu Z."/>
            <person name="Li T."/>
            <person name="Zhao F."/>
            <person name="Overmann J."/>
            <person name="Bryant D.A."/>
            <person name="Richardson P."/>
        </authorList>
    </citation>
    <scope>NUCLEOTIDE SEQUENCE [LARGE SCALE GENOMIC DNA]</scope>
    <source>
        <strain>DSM 5477 / BU-1</strain>
    </source>
</reference>
<feature type="chain" id="PRO_1000090457" description="UDP-N-acetylglucosamine--N-acetylmuramyl-(pentapeptide) pyrophosphoryl-undecaprenol N-acetylglucosamine transferase">
    <location>
        <begin position="1"/>
        <end position="365"/>
    </location>
</feature>
<feature type="binding site" evidence="1">
    <location>
        <begin position="10"/>
        <end position="12"/>
    </location>
    <ligand>
        <name>UDP-N-acetyl-alpha-D-glucosamine</name>
        <dbReference type="ChEBI" id="CHEBI:57705"/>
    </ligand>
</feature>
<feature type="binding site" evidence="1">
    <location>
        <position position="128"/>
    </location>
    <ligand>
        <name>UDP-N-acetyl-alpha-D-glucosamine</name>
        <dbReference type="ChEBI" id="CHEBI:57705"/>
    </ligand>
</feature>
<feature type="binding site" evidence="1">
    <location>
        <position position="170"/>
    </location>
    <ligand>
        <name>UDP-N-acetyl-alpha-D-glucosamine</name>
        <dbReference type="ChEBI" id="CHEBI:57705"/>
    </ligand>
</feature>
<feature type="binding site" evidence="1">
    <location>
        <position position="199"/>
    </location>
    <ligand>
        <name>UDP-N-acetyl-alpha-D-glucosamine</name>
        <dbReference type="ChEBI" id="CHEBI:57705"/>
    </ligand>
</feature>
<feature type="binding site" evidence="1">
    <location>
        <position position="250"/>
    </location>
    <ligand>
        <name>UDP-N-acetyl-alpha-D-glucosamine</name>
        <dbReference type="ChEBI" id="CHEBI:57705"/>
    </ligand>
</feature>
<feature type="binding site" evidence="1">
    <location>
        <position position="295"/>
    </location>
    <ligand>
        <name>UDP-N-acetyl-alpha-D-glucosamine</name>
        <dbReference type="ChEBI" id="CHEBI:57705"/>
    </ligand>
</feature>